<accession>P49923</accession>
<feature type="signal peptide" evidence="1">
    <location>
        <begin position="1"/>
        <end position="27"/>
    </location>
</feature>
<feature type="chain" id="PRO_0000017780" description="Lipoprotein lipase">
    <location>
        <begin position="28"/>
        <end position="478"/>
    </location>
</feature>
<feature type="domain" description="PLAT" evidence="6">
    <location>
        <begin position="344"/>
        <end position="467"/>
    </location>
</feature>
<feature type="region of interest" description="Interaction with GPIHBP1" evidence="2">
    <location>
        <begin position="35"/>
        <end position="56"/>
    </location>
</feature>
<feature type="region of interest" description="Essential for determining substrate specificity" evidence="2">
    <location>
        <begin position="246"/>
        <end position="269"/>
    </location>
</feature>
<feature type="region of interest" description="Important for interaction with lipoprotein particles" evidence="2">
    <location>
        <begin position="420"/>
        <end position="424"/>
    </location>
</feature>
<feature type="region of interest" description="Important for heparin binding" evidence="2">
    <location>
        <begin position="433"/>
        <end position="437"/>
    </location>
</feature>
<feature type="region of interest" description="Interaction with GPIHBP1" evidence="2">
    <location>
        <begin position="446"/>
        <end position="470"/>
    </location>
</feature>
<feature type="active site" description="Nucleophile" evidence="2">
    <location>
        <position position="162"/>
    </location>
</feature>
<feature type="active site" description="Charge relay system" evidence="7">
    <location>
        <position position="186"/>
    </location>
</feature>
<feature type="active site" description="Charge relay system" evidence="7">
    <location>
        <position position="271"/>
    </location>
</feature>
<feature type="binding site" evidence="2">
    <location>
        <position position="197"/>
    </location>
    <ligand>
        <name>Ca(2+)</name>
        <dbReference type="ChEBI" id="CHEBI:29108"/>
    </ligand>
</feature>
<feature type="binding site" evidence="2">
    <location>
        <position position="200"/>
    </location>
    <ligand>
        <name>Ca(2+)</name>
        <dbReference type="ChEBI" id="CHEBI:29108"/>
    </ligand>
</feature>
<feature type="binding site" evidence="2">
    <location>
        <position position="202"/>
    </location>
    <ligand>
        <name>Ca(2+)</name>
        <dbReference type="ChEBI" id="CHEBI:29108"/>
    </ligand>
</feature>
<feature type="binding site" evidence="2">
    <location>
        <position position="205"/>
    </location>
    <ligand>
        <name>Ca(2+)</name>
        <dbReference type="ChEBI" id="CHEBI:29108"/>
    </ligand>
</feature>
<feature type="modified residue" description="3'-nitrotyrosine" evidence="4">
    <location>
        <position position="124"/>
    </location>
</feature>
<feature type="modified residue" description="3'-nitrotyrosine" evidence="4">
    <location>
        <position position="194"/>
    </location>
</feature>
<feature type="modified residue" description="3'-nitrotyrosine" evidence="4">
    <location>
        <position position="346"/>
    </location>
</feature>
<feature type="glycosylation site" description="N-linked (GlcNAc...) asparagine" evidence="5">
    <location>
        <position position="73"/>
    </location>
</feature>
<feature type="glycosylation site" description="N-linked (GlcNAc...) asparagine" evidence="5">
    <location>
        <position position="389"/>
    </location>
</feature>
<feature type="disulfide bond" evidence="6">
    <location>
        <begin position="57"/>
        <end position="70"/>
    </location>
</feature>
<feature type="disulfide bond" evidence="6">
    <location>
        <begin position="246"/>
        <end position="269"/>
    </location>
</feature>
<feature type="disulfide bond" evidence="6">
    <location>
        <begin position="294"/>
        <end position="313"/>
    </location>
</feature>
<feature type="disulfide bond" evidence="6">
    <location>
        <begin position="305"/>
        <end position="308"/>
    </location>
</feature>
<feature type="disulfide bond" evidence="6">
    <location>
        <begin position="448"/>
        <end position="468"/>
    </location>
</feature>
<protein>
    <recommendedName>
        <fullName>Lipoprotein lipase</fullName>
        <shortName>LPL</shortName>
        <ecNumber evidence="3">3.1.1.34</ecNumber>
    </recommendedName>
    <alternativeName>
        <fullName>Phospholipase A1</fullName>
        <ecNumber evidence="2">3.1.1.32</ecNumber>
    </alternativeName>
</protein>
<comment type="function">
    <text evidence="2">Key enzyme in triglyceride metabolism (By similarity). Catalyzes the hydrolysis of triglycerides from circulating chylomicrons and very low density lipoproteins (VLDL), and thereby plays an important role in lipid clearance from the blood stream, lipid utilization and storage (By similarity). Although it has both phospholipase and triglyceride lipase activities it is primarily a triglyceride lipase with low but detectable phospholipase activity (By similarity). Mediates margination of triglyceride-rich lipoprotein particles in capillaries (By similarity). Recruited to its site of action on the luminal surface of vascular endothelium by binding to GPIHBP1 and cell surface heparan sulfate proteoglycans (By similarity).</text>
</comment>
<comment type="catalytic activity">
    <reaction evidence="3">
        <text>a triacylglycerol + H2O = a diacylglycerol + a fatty acid + H(+)</text>
        <dbReference type="Rhea" id="RHEA:12044"/>
        <dbReference type="ChEBI" id="CHEBI:15377"/>
        <dbReference type="ChEBI" id="CHEBI:15378"/>
        <dbReference type="ChEBI" id="CHEBI:17855"/>
        <dbReference type="ChEBI" id="CHEBI:18035"/>
        <dbReference type="ChEBI" id="CHEBI:28868"/>
        <dbReference type="EC" id="3.1.1.34"/>
    </reaction>
</comment>
<comment type="catalytic activity">
    <reaction evidence="2">
        <text>a 1,2-diacyl-sn-glycero-3-phosphocholine + H2O = a 2-acyl-sn-glycero-3-phosphocholine + a fatty acid + H(+)</text>
        <dbReference type="Rhea" id="RHEA:18689"/>
        <dbReference type="ChEBI" id="CHEBI:15377"/>
        <dbReference type="ChEBI" id="CHEBI:15378"/>
        <dbReference type="ChEBI" id="CHEBI:28868"/>
        <dbReference type="ChEBI" id="CHEBI:57643"/>
        <dbReference type="ChEBI" id="CHEBI:57875"/>
        <dbReference type="EC" id="3.1.1.32"/>
    </reaction>
</comment>
<comment type="catalytic activity">
    <reaction evidence="2">
        <text>1,2,3-tri-(9Z-octadecenoyl)-glycerol + H2O = di-(9Z)-octadecenoylglycerol + (9Z)-octadecenoate + H(+)</text>
        <dbReference type="Rhea" id="RHEA:38575"/>
        <dbReference type="ChEBI" id="CHEBI:15377"/>
        <dbReference type="ChEBI" id="CHEBI:15378"/>
        <dbReference type="ChEBI" id="CHEBI:30823"/>
        <dbReference type="ChEBI" id="CHEBI:53753"/>
        <dbReference type="ChEBI" id="CHEBI:75945"/>
    </reaction>
    <physiologicalReaction direction="left-to-right" evidence="2">
        <dbReference type="Rhea" id="RHEA:38576"/>
    </physiologicalReaction>
</comment>
<comment type="catalytic activity">
    <reaction evidence="2">
        <text>1,2-di-(9Z-octadecenoyl)-sn-glycero-3-phosphocholine + H2O = (9Z-octadecenoyl)-sn-glycero-3-phosphocholine + (9Z)-octadecenoate + H(+)</text>
        <dbReference type="Rhea" id="RHEA:38699"/>
        <dbReference type="ChEBI" id="CHEBI:15377"/>
        <dbReference type="ChEBI" id="CHEBI:15378"/>
        <dbReference type="ChEBI" id="CHEBI:30823"/>
        <dbReference type="ChEBI" id="CHEBI:74669"/>
        <dbReference type="ChEBI" id="CHEBI:76083"/>
    </reaction>
    <physiologicalReaction direction="left-to-right" evidence="2">
        <dbReference type="Rhea" id="RHEA:38700"/>
    </physiologicalReaction>
</comment>
<comment type="catalytic activity">
    <reaction evidence="2">
        <text>1,2,3-tributanoylglycerol + H2O = dibutanoylglycerol + butanoate + H(+)</text>
        <dbReference type="Rhea" id="RHEA:40475"/>
        <dbReference type="ChEBI" id="CHEBI:15377"/>
        <dbReference type="ChEBI" id="CHEBI:15378"/>
        <dbReference type="ChEBI" id="CHEBI:17968"/>
        <dbReference type="ChEBI" id="CHEBI:35020"/>
        <dbReference type="ChEBI" id="CHEBI:76478"/>
    </reaction>
    <physiologicalReaction direction="left-to-right" evidence="2">
        <dbReference type="Rhea" id="RHEA:40476"/>
    </physiologicalReaction>
</comment>
<comment type="catalytic activity">
    <reaction evidence="2">
        <text>1,2-dihexadecanoyl-sn-glycero-3-phosphocholine + H2O = hexadecanoyl-sn-glycero-3-phosphocholine + hexadecanoate + H(+)</text>
        <dbReference type="Rhea" id="RHEA:41384"/>
        <dbReference type="ChEBI" id="CHEBI:7896"/>
        <dbReference type="ChEBI" id="CHEBI:15377"/>
        <dbReference type="ChEBI" id="CHEBI:15378"/>
        <dbReference type="ChEBI" id="CHEBI:64563"/>
        <dbReference type="ChEBI" id="CHEBI:72999"/>
    </reaction>
    <physiologicalReaction direction="left-to-right" evidence="2">
        <dbReference type="Rhea" id="RHEA:41385"/>
    </physiologicalReaction>
</comment>
<comment type="activity regulation">
    <text evidence="2 3">The apolipoprotein APOC2 acts as a coactivator of LPL activity (By similarity). Ca(2+) binding promotes protein stability and formation of the active homodimer. Interaction with GPIHBP1 protects LPL against inactivation by ANGPTL4 (By similarity).</text>
</comment>
<comment type="subunit">
    <text evidence="2 3">Homodimer. Interacts with GPIHBP1 with 1:1 stoichiometry (By similarity). Interacts with APOC2; the interaction activates LPL activity in the presence of lipids (By similarity). Interaction with heparan sulfate proteoglycans is required to protect LPL against loss of activity. Associates with lipoprotein particles in blood plasma. Interacts with LMF1 and SEL1L; interaction with SEL1L is required to prevent aggregation of newly synthesized LPL in the endoplasmic reticulum (ER), and for normal export of LPL from the ER to the extracellular space (By similarity). Interacts with SORL1; SORL1 acts as a sorting receptor, promoting LPL localization to endosomes and later to lysosomes, leading to degradation of newly synthesized LPL (By similarity).</text>
</comment>
<comment type="subcellular location">
    <subcellularLocation>
        <location evidence="3">Cell membrane</location>
        <topology evidence="3">Peripheral membrane protein</topology>
        <orientation evidence="3">Extracellular side</orientation>
    </subcellularLocation>
    <subcellularLocation>
        <location evidence="3">Secreted</location>
    </subcellularLocation>
    <subcellularLocation>
        <location evidence="3">Secreted</location>
        <location evidence="3">Extracellular space</location>
        <location evidence="3">Extracellular matrix</location>
    </subcellularLocation>
    <text evidence="3">Newly synthesized LPL binds to cell surface heparan proteoglycans and is then released by heparanase. Subsequently, it becomes attached to heparan proteoglycan on endothelial cells. Locates to the plasma membrane of microvilli of hepatocytes with triglyceride-rich lipoproteins (TRL). Some of the bound LPL is then internalized and located inside non-coated endocytic vesicles.</text>
</comment>
<comment type="PTM">
    <text evidence="4">Tyrosine nitration after lipopolysaccharide (LPS) challenge down-regulates the lipase activity.</text>
</comment>
<comment type="similarity">
    <text evidence="8">Belongs to the AB hydrolase superfamily. Lipase family.</text>
</comment>
<reference key="1">
    <citation type="journal article" date="1992" name="Anim. Genet.">
        <title>Isolation and sequencing of porcine lipoprotein lipase cDNA and its use in multiallelic restriction fragment length polymorphism detection.</title>
        <authorList>
            <person name="Harbitz I."/>
            <person name="Kristensen T."/>
            <person name="Kran S."/>
            <person name="Davies W."/>
        </authorList>
    </citation>
    <scope>NUCLEOTIDE SEQUENCE [MRNA]</scope>
    <source>
        <strain>Norwegian Landrace</strain>
        <tissue>Skeletal muscle</tissue>
    </source>
</reference>
<evidence type="ECO:0000250" key="1"/>
<evidence type="ECO:0000250" key="2">
    <source>
        <dbReference type="UniProtKB" id="P06858"/>
    </source>
</evidence>
<evidence type="ECO:0000250" key="3">
    <source>
        <dbReference type="UniProtKB" id="P11151"/>
    </source>
</evidence>
<evidence type="ECO:0000250" key="4">
    <source>
        <dbReference type="UniProtKB" id="Q06000"/>
    </source>
</evidence>
<evidence type="ECO:0000255" key="5"/>
<evidence type="ECO:0000255" key="6">
    <source>
        <dbReference type="PROSITE-ProRule" id="PRU00152"/>
    </source>
</evidence>
<evidence type="ECO:0000255" key="7">
    <source>
        <dbReference type="PROSITE-ProRule" id="PRU10037"/>
    </source>
</evidence>
<evidence type="ECO:0000305" key="8"/>
<sequence>MESKALLLVALSVWLQSLIVSREGLATADRISGGRDFTDIESKFALRTPEDTVEDTCHLIPGVTESVANCHFNHSSKTFVVIHGWTVTGMYESWVPKLVAALYKREPDSNVIVVDWLSRAQQHYPISAGYTKLVGQDVATFIDWMAVEFSYPPNNVHLLGYSLGAHAAGIAGSLTKKKVNRITGLDPAGPNFEYAEAPSRLSPDDADFVDVLHTFTRGSPGRSIGIQKPVGHVDIYPNGGTFQPGCNIGEAIRVIAERGLGDVDQLVKCSHERSIHLFIDSLLNEENPSKAYRCNSKEAFEKGLCLSCRKNRCNNLGYEINKVRAKRSSKMYLKTRAQMPYKVFHYQVKMRFSGTESDTHTNQAFEISLYGTVAESENIPFTLPEVSTNKTYSFLIYTEVDIGELLMLKLKWVSDSYFSWSNWWSSPGFAIEKIRVKAGETQKKVIFCSREKKSHLQKGKSSVVFVKCHDKSLNRKSG</sequence>
<keyword id="KW-0106">Calcium</keyword>
<keyword id="KW-1003">Cell membrane</keyword>
<keyword id="KW-0162">Chylomicron</keyword>
<keyword id="KW-1015">Disulfide bond</keyword>
<keyword id="KW-0272">Extracellular matrix</keyword>
<keyword id="KW-0325">Glycoprotein</keyword>
<keyword id="KW-0358">Heparin-binding</keyword>
<keyword id="KW-0378">Hydrolase</keyword>
<keyword id="KW-0442">Lipid degradation</keyword>
<keyword id="KW-0443">Lipid metabolism</keyword>
<keyword id="KW-0472">Membrane</keyword>
<keyword id="KW-0479">Metal-binding</keyword>
<keyword id="KW-0944">Nitration</keyword>
<keyword id="KW-1185">Reference proteome</keyword>
<keyword id="KW-0964">Secreted</keyword>
<keyword id="KW-0732">Signal</keyword>
<keyword id="KW-0850">VLDL</keyword>
<dbReference type="EC" id="3.1.1.34" evidence="3"/>
<dbReference type="EC" id="3.1.1.32" evidence="2"/>
<dbReference type="EMBL" id="X62984">
    <property type="protein sequence ID" value="CAA44725.1"/>
    <property type="molecule type" value="mRNA"/>
</dbReference>
<dbReference type="PIR" id="I47146">
    <property type="entry name" value="S18158"/>
</dbReference>
<dbReference type="RefSeq" id="NP_999451.1">
    <property type="nucleotide sequence ID" value="NM_214286.1"/>
</dbReference>
<dbReference type="SMR" id="P49923"/>
<dbReference type="FunCoup" id="P49923">
    <property type="interactions" value="203"/>
</dbReference>
<dbReference type="STRING" id="9823.ENSSSCP00000057312"/>
<dbReference type="ESTHER" id="pig-lipli">
    <property type="family name" value="Lipoprotein_Lipase"/>
</dbReference>
<dbReference type="GlyCosmos" id="P49923">
    <property type="glycosylation" value="2 sites, No reported glycans"/>
</dbReference>
<dbReference type="GlyGen" id="P49923">
    <property type="glycosylation" value="2 sites"/>
</dbReference>
<dbReference type="PeptideAtlas" id="P49923"/>
<dbReference type="GeneID" id="397537"/>
<dbReference type="KEGG" id="ssc:397537"/>
<dbReference type="CTD" id="4023"/>
<dbReference type="InParanoid" id="P49923"/>
<dbReference type="OrthoDB" id="199913at2759"/>
<dbReference type="Proteomes" id="UP000008227">
    <property type="component" value="Unplaced"/>
</dbReference>
<dbReference type="Proteomes" id="UP000314985">
    <property type="component" value="Unplaced"/>
</dbReference>
<dbReference type="Proteomes" id="UP000694570">
    <property type="component" value="Unplaced"/>
</dbReference>
<dbReference type="Proteomes" id="UP000694571">
    <property type="component" value="Unplaced"/>
</dbReference>
<dbReference type="Proteomes" id="UP000694720">
    <property type="component" value="Unplaced"/>
</dbReference>
<dbReference type="Proteomes" id="UP000694722">
    <property type="component" value="Unplaced"/>
</dbReference>
<dbReference type="Proteomes" id="UP000694723">
    <property type="component" value="Unplaced"/>
</dbReference>
<dbReference type="Proteomes" id="UP000694724">
    <property type="component" value="Unplaced"/>
</dbReference>
<dbReference type="Proteomes" id="UP000694725">
    <property type="component" value="Unplaced"/>
</dbReference>
<dbReference type="Proteomes" id="UP000694726">
    <property type="component" value="Unplaced"/>
</dbReference>
<dbReference type="Proteomes" id="UP000694727">
    <property type="component" value="Unplaced"/>
</dbReference>
<dbReference type="Proteomes" id="UP000694728">
    <property type="component" value="Unplaced"/>
</dbReference>
<dbReference type="GO" id="GO:0042627">
    <property type="term" value="C:chylomicron"/>
    <property type="evidence" value="ECO:0007669"/>
    <property type="project" value="UniProtKB-KW"/>
</dbReference>
<dbReference type="GO" id="GO:0005615">
    <property type="term" value="C:extracellular space"/>
    <property type="evidence" value="ECO:0000250"/>
    <property type="project" value="UniProtKB"/>
</dbReference>
<dbReference type="GO" id="GO:0005886">
    <property type="term" value="C:plasma membrane"/>
    <property type="evidence" value="ECO:0007669"/>
    <property type="project" value="UniProtKB-SubCell"/>
</dbReference>
<dbReference type="GO" id="GO:0034361">
    <property type="term" value="C:very-low-density lipoprotein particle"/>
    <property type="evidence" value="ECO:0007669"/>
    <property type="project" value="UniProtKB-KW"/>
</dbReference>
<dbReference type="GO" id="GO:0034185">
    <property type="term" value="F:apolipoprotein binding"/>
    <property type="evidence" value="ECO:0000318"/>
    <property type="project" value="GO_Central"/>
</dbReference>
<dbReference type="GO" id="GO:0008201">
    <property type="term" value="F:heparin binding"/>
    <property type="evidence" value="ECO:0000250"/>
    <property type="project" value="UniProtKB"/>
</dbReference>
<dbReference type="GO" id="GO:0004465">
    <property type="term" value="F:lipoprotein lipase activity"/>
    <property type="evidence" value="ECO:0000250"/>
    <property type="project" value="UniProtKB"/>
</dbReference>
<dbReference type="GO" id="GO:0046872">
    <property type="term" value="F:metal ion binding"/>
    <property type="evidence" value="ECO:0007669"/>
    <property type="project" value="UniProtKB-KW"/>
</dbReference>
<dbReference type="GO" id="GO:0008970">
    <property type="term" value="F:phospholipase A1 activity"/>
    <property type="evidence" value="ECO:0000250"/>
    <property type="project" value="UniProtKB"/>
</dbReference>
<dbReference type="GO" id="GO:0004806">
    <property type="term" value="F:triacylglycerol lipase activity"/>
    <property type="evidence" value="ECO:0000250"/>
    <property type="project" value="UniProtKB"/>
</dbReference>
<dbReference type="GO" id="GO:0042632">
    <property type="term" value="P:cholesterol homeostasis"/>
    <property type="evidence" value="ECO:0000318"/>
    <property type="project" value="GO_Central"/>
</dbReference>
<dbReference type="GO" id="GO:0006633">
    <property type="term" value="P:fatty acid biosynthetic process"/>
    <property type="evidence" value="ECO:0000318"/>
    <property type="project" value="GO_Central"/>
</dbReference>
<dbReference type="GO" id="GO:0034375">
    <property type="term" value="P:high-density lipoprotein particle remodeling"/>
    <property type="evidence" value="ECO:0000318"/>
    <property type="project" value="GO_Central"/>
</dbReference>
<dbReference type="GO" id="GO:0009749">
    <property type="term" value="P:response to glucose"/>
    <property type="evidence" value="ECO:0000250"/>
    <property type="project" value="AgBase"/>
</dbReference>
<dbReference type="GO" id="GO:0019433">
    <property type="term" value="P:triglyceride catabolic process"/>
    <property type="evidence" value="ECO:0000250"/>
    <property type="project" value="UniProtKB"/>
</dbReference>
<dbReference type="GO" id="GO:0034372">
    <property type="term" value="P:very-low-density lipoprotein particle remodeling"/>
    <property type="evidence" value="ECO:0000318"/>
    <property type="project" value="GO_Central"/>
</dbReference>
<dbReference type="CDD" id="cd00707">
    <property type="entry name" value="Pancreat_lipase_like"/>
    <property type="match status" value="1"/>
</dbReference>
<dbReference type="CDD" id="cd01758">
    <property type="entry name" value="PLAT_LPL"/>
    <property type="match status" value="1"/>
</dbReference>
<dbReference type="FunFam" id="2.60.60.20:FF:000006">
    <property type="entry name" value="Lipoprotein lipase"/>
    <property type="match status" value="1"/>
</dbReference>
<dbReference type="FunFam" id="3.40.50.1820:FF:000031">
    <property type="entry name" value="Lipoprotein lipase"/>
    <property type="match status" value="1"/>
</dbReference>
<dbReference type="Gene3D" id="3.40.50.1820">
    <property type="entry name" value="alpha/beta hydrolase"/>
    <property type="match status" value="1"/>
</dbReference>
<dbReference type="Gene3D" id="2.60.60.20">
    <property type="entry name" value="PLAT/LH2 domain"/>
    <property type="match status" value="1"/>
</dbReference>
<dbReference type="InterPro" id="IPR029058">
    <property type="entry name" value="AB_hydrolase_fold"/>
</dbReference>
<dbReference type="InterPro" id="IPR013818">
    <property type="entry name" value="Lipase"/>
</dbReference>
<dbReference type="InterPro" id="IPR016272">
    <property type="entry name" value="Lipase_LIPH"/>
</dbReference>
<dbReference type="InterPro" id="IPR033906">
    <property type="entry name" value="Lipase_N"/>
</dbReference>
<dbReference type="InterPro" id="IPR002330">
    <property type="entry name" value="Lipo_Lipase"/>
</dbReference>
<dbReference type="InterPro" id="IPR001024">
    <property type="entry name" value="PLAT/LH2_dom"/>
</dbReference>
<dbReference type="InterPro" id="IPR036392">
    <property type="entry name" value="PLAT/LH2_dom_sf"/>
</dbReference>
<dbReference type="InterPro" id="IPR000734">
    <property type="entry name" value="TAG_lipase"/>
</dbReference>
<dbReference type="NCBIfam" id="TIGR03230">
    <property type="entry name" value="lipo_lipase"/>
    <property type="match status" value="1"/>
</dbReference>
<dbReference type="PANTHER" id="PTHR11610">
    <property type="entry name" value="LIPASE"/>
    <property type="match status" value="1"/>
</dbReference>
<dbReference type="PANTHER" id="PTHR11610:SF3">
    <property type="entry name" value="LIPOPROTEIN LIPASE"/>
    <property type="match status" value="1"/>
</dbReference>
<dbReference type="Pfam" id="PF00151">
    <property type="entry name" value="Lipase"/>
    <property type="match status" value="1"/>
</dbReference>
<dbReference type="Pfam" id="PF01477">
    <property type="entry name" value="PLAT"/>
    <property type="match status" value="1"/>
</dbReference>
<dbReference type="PIRSF" id="PIRSF000865">
    <property type="entry name" value="Lipoprotein_lipase_LIPH"/>
    <property type="match status" value="1"/>
</dbReference>
<dbReference type="PRINTS" id="PR00822">
    <property type="entry name" value="LIPOLIPASE"/>
</dbReference>
<dbReference type="PRINTS" id="PR00821">
    <property type="entry name" value="TAGLIPASE"/>
</dbReference>
<dbReference type="SMART" id="SM00308">
    <property type="entry name" value="LH2"/>
    <property type="match status" value="1"/>
</dbReference>
<dbReference type="SUPFAM" id="SSF53474">
    <property type="entry name" value="alpha/beta-Hydrolases"/>
    <property type="match status" value="1"/>
</dbReference>
<dbReference type="SUPFAM" id="SSF49723">
    <property type="entry name" value="Lipase/lipooxygenase domain (PLAT/LH2 domain)"/>
    <property type="match status" value="1"/>
</dbReference>
<dbReference type="PROSITE" id="PS00120">
    <property type="entry name" value="LIPASE_SER"/>
    <property type="match status" value="1"/>
</dbReference>
<dbReference type="PROSITE" id="PS50095">
    <property type="entry name" value="PLAT"/>
    <property type="match status" value="1"/>
</dbReference>
<gene>
    <name type="primary">LPL</name>
</gene>
<proteinExistence type="evidence at transcript level"/>
<organism>
    <name type="scientific">Sus scrofa</name>
    <name type="common">Pig</name>
    <dbReference type="NCBI Taxonomy" id="9823"/>
    <lineage>
        <taxon>Eukaryota</taxon>
        <taxon>Metazoa</taxon>
        <taxon>Chordata</taxon>
        <taxon>Craniata</taxon>
        <taxon>Vertebrata</taxon>
        <taxon>Euteleostomi</taxon>
        <taxon>Mammalia</taxon>
        <taxon>Eutheria</taxon>
        <taxon>Laurasiatheria</taxon>
        <taxon>Artiodactyla</taxon>
        <taxon>Suina</taxon>
        <taxon>Suidae</taxon>
        <taxon>Sus</taxon>
    </lineage>
</organism>
<name>LIPL_PIG</name>